<accession>Q5VJ60</accession>
<feature type="chain" id="PRO_0000060653" description="Cytochrome b">
    <location>
        <begin position="1"/>
        <end position="379"/>
    </location>
</feature>
<feature type="transmembrane region" description="Helical" evidence="2">
    <location>
        <begin position="33"/>
        <end position="53"/>
    </location>
</feature>
<feature type="transmembrane region" description="Helical" evidence="2">
    <location>
        <begin position="77"/>
        <end position="98"/>
    </location>
</feature>
<feature type="transmembrane region" description="Helical" evidence="2">
    <location>
        <begin position="113"/>
        <end position="133"/>
    </location>
</feature>
<feature type="transmembrane region" description="Helical" evidence="2">
    <location>
        <begin position="178"/>
        <end position="198"/>
    </location>
</feature>
<feature type="transmembrane region" description="Helical" evidence="2">
    <location>
        <begin position="226"/>
        <end position="246"/>
    </location>
</feature>
<feature type="transmembrane region" description="Helical" evidence="2">
    <location>
        <begin position="288"/>
        <end position="308"/>
    </location>
</feature>
<feature type="transmembrane region" description="Helical" evidence="2">
    <location>
        <begin position="320"/>
        <end position="340"/>
    </location>
</feature>
<feature type="transmembrane region" description="Helical" evidence="2">
    <location>
        <begin position="347"/>
        <end position="367"/>
    </location>
</feature>
<feature type="binding site" description="axial binding residue" evidence="2">
    <location>
        <position position="83"/>
    </location>
    <ligand>
        <name>heme b</name>
        <dbReference type="ChEBI" id="CHEBI:60344"/>
        <label>b562</label>
    </ligand>
    <ligandPart>
        <name>Fe</name>
        <dbReference type="ChEBI" id="CHEBI:18248"/>
    </ligandPart>
</feature>
<feature type="binding site" description="axial binding residue" evidence="2">
    <location>
        <position position="97"/>
    </location>
    <ligand>
        <name>heme b</name>
        <dbReference type="ChEBI" id="CHEBI:60344"/>
        <label>b566</label>
    </ligand>
    <ligandPart>
        <name>Fe</name>
        <dbReference type="ChEBI" id="CHEBI:18248"/>
    </ligandPart>
</feature>
<feature type="binding site" description="axial binding residue" evidence="2">
    <location>
        <position position="182"/>
    </location>
    <ligand>
        <name>heme b</name>
        <dbReference type="ChEBI" id="CHEBI:60344"/>
        <label>b562</label>
    </ligand>
    <ligandPart>
        <name>Fe</name>
        <dbReference type="ChEBI" id="CHEBI:18248"/>
    </ligandPart>
</feature>
<feature type="binding site" description="axial binding residue" evidence="2">
    <location>
        <position position="196"/>
    </location>
    <ligand>
        <name>heme b</name>
        <dbReference type="ChEBI" id="CHEBI:60344"/>
        <label>b566</label>
    </ligand>
    <ligandPart>
        <name>Fe</name>
        <dbReference type="ChEBI" id="CHEBI:18248"/>
    </ligandPart>
</feature>
<feature type="binding site" evidence="2">
    <location>
        <position position="201"/>
    </location>
    <ligand>
        <name>a ubiquinone</name>
        <dbReference type="ChEBI" id="CHEBI:16389"/>
    </ligand>
</feature>
<geneLocation type="mitochondrion"/>
<proteinExistence type="inferred from homology"/>
<name>CYB_AVALA</name>
<protein>
    <recommendedName>
        <fullName>Cytochrome b</fullName>
    </recommendedName>
    <alternativeName>
        <fullName>Complex III subunit 3</fullName>
    </alternativeName>
    <alternativeName>
        <fullName>Complex III subunit III</fullName>
    </alternativeName>
    <alternativeName>
        <fullName>Cytochrome b-c1 complex subunit 3</fullName>
    </alternativeName>
    <alternativeName>
        <fullName>Ubiquinol-cytochrome-c reductase complex cytochrome b subunit</fullName>
    </alternativeName>
</protein>
<evidence type="ECO:0000250" key="1"/>
<evidence type="ECO:0000250" key="2">
    <source>
        <dbReference type="UniProtKB" id="P00157"/>
    </source>
</evidence>
<evidence type="ECO:0000255" key="3">
    <source>
        <dbReference type="PROSITE-ProRule" id="PRU00967"/>
    </source>
</evidence>
<evidence type="ECO:0000255" key="4">
    <source>
        <dbReference type="PROSITE-ProRule" id="PRU00968"/>
    </source>
</evidence>
<comment type="function">
    <text evidence="2">Component of the ubiquinol-cytochrome c reductase complex (complex III or cytochrome b-c1 complex) that is part of the mitochondrial respiratory chain. The b-c1 complex mediates electron transfer from ubiquinol to cytochrome c. Contributes to the generation of a proton gradient across the mitochondrial membrane that is then used for ATP synthesis.</text>
</comment>
<comment type="cofactor">
    <cofactor evidence="2">
        <name>heme b</name>
        <dbReference type="ChEBI" id="CHEBI:60344"/>
    </cofactor>
    <text evidence="2">Binds 2 heme b groups non-covalently.</text>
</comment>
<comment type="subunit">
    <text evidence="2">The cytochrome bc1 complex contains 11 subunits: 3 respiratory subunits (MT-CYB, CYC1 and UQCRFS1), 2 core proteins (UQCRC1 and UQCRC2) and 6 low-molecular weight proteins (UQCRH/QCR6, UQCRB/QCR7, UQCRQ/QCR8, UQCR10/QCR9, UQCR11/QCR10 and a cleavage product of UQCRFS1). This cytochrome bc1 complex then forms a dimer.</text>
</comment>
<comment type="subcellular location">
    <subcellularLocation>
        <location evidence="2">Mitochondrion inner membrane</location>
        <topology evidence="2">Multi-pass membrane protein</topology>
    </subcellularLocation>
</comment>
<comment type="miscellaneous">
    <text evidence="1">Heme 1 (or BL or b562) is low-potential and absorbs at about 562 nm, and heme 2 (or BH or b566) is high-potential and absorbs at about 566 nm.</text>
</comment>
<comment type="similarity">
    <text evidence="3 4">Belongs to the cytochrome b family.</text>
</comment>
<comment type="caution">
    <text evidence="2">The full-length protein contains only eight transmembrane helices, not nine as predicted by bioinformatics tools.</text>
</comment>
<reference key="1">
    <citation type="submission" date="2003-10" db="EMBL/GenBank/DDBJ databases">
        <title>61 primate SINEs and the evolution of strepsirrhines.</title>
        <authorList>
            <person name="Roos C."/>
            <person name="Schmitz J."/>
            <person name="Zischler H."/>
        </authorList>
    </citation>
    <scope>NUCLEOTIDE SEQUENCE [GENOMIC DNA]</scope>
</reference>
<organism>
    <name type="scientific">Avahi laniger</name>
    <name type="common">Eastern woolly lemur</name>
    <dbReference type="NCBI Taxonomy" id="122246"/>
    <lineage>
        <taxon>Eukaryota</taxon>
        <taxon>Metazoa</taxon>
        <taxon>Chordata</taxon>
        <taxon>Craniata</taxon>
        <taxon>Vertebrata</taxon>
        <taxon>Euteleostomi</taxon>
        <taxon>Mammalia</taxon>
        <taxon>Eutheria</taxon>
        <taxon>Euarchontoglires</taxon>
        <taxon>Primates</taxon>
        <taxon>Strepsirrhini</taxon>
        <taxon>Lemuriformes</taxon>
        <taxon>Indriidae</taxon>
        <taxon>Avahi</taxon>
    </lineage>
</organism>
<keyword id="KW-0249">Electron transport</keyword>
<keyword id="KW-0349">Heme</keyword>
<keyword id="KW-0408">Iron</keyword>
<keyword id="KW-0472">Membrane</keyword>
<keyword id="KW-0479">Metal-binding</keyword>
<keyword id="KW-0496">Mitochondrion</keyword>
<keyword id="KW-0999">Mitochondrion inner membrane</keyword>
<keyword id="KW-0679">Respiratory chain</keyword>
<keyword id="KW-0812">Transmembrane</keyword>
<keyword id="KW-1133">Transmembrane helix</keyword>
<keyword id="KW-0813">Transport</keyword>
<keyword id="KW-0830">Ubiquinone</keyword>
<sequence length="379" mass="42639">MTNIRKIHPLMKIMNNSFIDLPAPSNISSWWNFGSLLGACLALQIVTGLFLAMHYTADTTTAFSSVTHICRDVNYGWVIRYLHTNGASMFFLCLFIHVGRGLYYGSFSLSETWNIGIILLLTVMATAFMGYVLPWGQMSFWGATVITNLLSAIPYIGSDLVEWIWGGFSVDKATLTRFFAFHFILPLIIAALVMVHLLFLHETGFNNPLGVSSNPDKIPFHPYYTTKDLLGVILLILPLMTLVLFFPDLLGDPDNYTPANPLNTPPHIKPEWYFLFAYAILRSIPNKLGEVLALISSILILAIIPLLQTAKQQSMMFRPLSQCLFWVLVADLYTLTWIGGQPVENPFITIGQAASILYFSLILIIMPMVSLIENKMLKW</sequence>
<dbReference type="EMBL" id="AY441453">
    <property type="protein sequence ID" value="AAS00134.1"/>
    <property type="molecule type" value="Genomic_DNA"/>
</dbReference>
<dbReference type="SMR" id="Q5VJ60"/>
<dbReference type="GO" id="GO:0005743">
    <property type="term" value="C:mitochondrial inner membrane"/>
    <property type="evidence" value="ECO:0007669"/>
    <property type="project" value="UniProtKB-SubCell"/>
</dbReference>
<dbReference type="GO" id="GO:0045275">
    <property type="term" value="C:respiratory chain complex III"/>
    <property type="evidence" value="ECO:0007669"/>
    <property type="project" value="InterPro"/>
</dbReference>
<dbReference type="GO" id="GO:0046872">
    <property type="term" value="F:metal ion binding"/>
    <property type="evidence" value="ECO:0007669"/>
    <property type="project" value="UniProtKB-KW"/>
</dbReference>
<dbReference type="GO" id="GO:0008121">
    <property type="term" value="F:ubiquinol-cytochrome-c reductase activity"/>
    <property type="evidence" value="ECO:0007669"/>
    <property type="project" value="InterPro"/>
</dbReference>
<dbReference type="GO" id="GO:0006122">
    <property type="term" value="P:mitochondrial electron transport, ubiquinol to cytochrome c"/>
    <property type="evidence" value="ECO:0007669"/>
    <property type="project" value="TreeGrafter"/>
</dbReference>
<dbReference type="CDD" id="cd00290">
    <property type="entry name" value="cytochrome_b_C"/>
    <property type="match status" value="1"/>
</dbReference>
<dbReference type="CDD" id="cd00284">
    <property type="entry name" value="Cytochrome_b_N"/>
    <property type="match status" value="1"/>
</dbReference>
<dbReference type="FunFam" id="1.20.810.10:FF:000002">
    <property type="entry name" value="Cytochrome b"/>
    <property type="match status" value="1"/>
</dbReference>
<dbReference type="Gene3D" id="1.20.810.10">
    <property type="entry name" value="Cytochrome Bc1 Complex, Chain C"/>
    <property type="match status" value="1"/>
</dbReference>
<dbReference type="InterPro" id="IPR005798">
    <property type="entry name" value="Cyt_b/b6_C"/>
</dbReference>
<dbReference type="InterPro" id="IPR036150">
    <property type="entry name" value="Cyt_b/b6_C_sf"/>
</dbReference>
<dbReference type="InterPro" id="IPR005797">
    <property type="entry name" value="Cyt_b/b6_N"/>
</dbReference>
<dbReference type="InterPro" id="IPR027387">
    <property type="entry name" value="Cytb/b6-like_sf"/>
</dbReference>
<dbReference type="InterPro" id="IPR030689">
    <property type="entry name" value="Cytochrome_b"/>
</dbReference>
<dbReference type="InterPro" id="IPR048260">
    <property type="entry name" value="Cytochrome_b_C_euk/bac"/>
</dbReference>
<dbReference type="InterPro" id="IPR048259">
    <property type="entry name" value="Cytochrome_b_N_euk/bac"/>
</dbReference>
<dbReference type="InterPro" id="IPR016174">
    <property type="entry name" value="Di-haem_cyt_TM"/>
</dbReference>
<dbReference type="PANTHER" id="PTHR19271">
    <property type="entry name" value="CYTOCHROME B"/>
    <property type="match status" value="1"/>
</dbReference>
<dbReference type="PANTHER" id="PTHR19271:SF16">
    <property type="entry name" value="CYTOCHROME B"/>
    <property type="match status" value="1"/>
</dbReference>
<dbReference type="Pfam" id="PF00032">
    <property type="entry name" value="Cytochrom_B_C"/>
    <property type="match status" value="1"/>
</dbReference>
<dbReference type="Pfam" id="PF00033">
    <property type="entry name" value="Cytochrome_B"/>
    <property type="match status" value="1"/>
</dbReference>
<dbReference type="PIRSF" id="PIRSF038885">
    <property type="entry name" value="COB"/>
    <property type="match status" value="1"/>
</dbReference>
<dbReference type="SUPFAM" id="SSF81648">
    <property type="entry name" value="a domain/subunit of cytochrome bc1 complex (Ubiquinol-cytochrome c reductase)"/>
    <property type="match status" value="1"/>
</dbReference>
<dbReference type="SUPFAM" id="SSF81342">
    <property type="entry name" value="Transmembrane di-heme cytochromes"/>
    <property type="match status" value="1"/>
</dbReference>
<dbReference type="PROSITE" id="PS51003">
    <property type="entry name" value="CYTB_CTER"/>
    <property type="match status" value="1"/>
</dbReference>
<dbReference type="PROSITE" id="PS51002">
    <property type="entry name" value="CYTB_NTER"/>
    <property type="match status" value="1"/>
</dbReference>
<gene>
    <name type="primary">MT-CYB</name>
    <name type="synonym">COB</name>
    <name type="synonym">CYTB</name>
    <name type="synonym">MTCYB</name>
</gene>